<feature type="chain" id="PRO_0000183820" description="Cytochrome c oxidase subunit 3">
    <location>
        <begin position="1"/>
        <end position="261"/>
    </location>
</feature>
<feature type="topological domain" description="Mitochondrial matrix" evidence="1">
    <location>
        <begin position="1"/>
        <end position="15"/>
    </location>
</feature>
<feature type="transmembrane region" description="Helical; Name=I" evidence="1">
    <location>
        <begin position="16"/>
        <end position="34"/>
    </location>
</feature>
<feature type="topological domain" description="Mitochondrial intermembrane" evidence="1">
    <location>
        <begin position="35"/>
        <end position="40"/>
    </location>
</feature>
<feature type="transmembrane region" description="Helical; Name=II" evidence="1">
    <location>
        <begin position="41"/>
        <end position="66"/>
    </location>
</feature>
<feature type="topological domain" description="Mitochondrial matrix" evidence="1">
    <location>
        <begin position="67"/>
        <end position="72"/>
    </location>
</feature>
<feature type="transmembrane region" description="Helical; Name=III" evidence="1">
    <location>
        <begin position="73"/>
        <end position="105"/>
    </location>
</feature>
<feature type="topological domain" description="Mitochondrial intermembrane" evidence="1">
    <location>
        <begin position="106"/>
        <end position="128"/>
    </location>
</feature>
<feature type="transmembrane region" description="Helical; Name=IV" evidence="1">
    <location>
        <begin position="129"/>
        <end position="152"/>
    </location>
</feature>
<feature type="topological domain" description="Mitochondrial matrix" evidence="1">
    <location>
        <begin position="153"/>
        <end position="155"/>
    </location>
</feature>
<feature type="transmembrane region" description="Helical; Name=V" evidence="1">
    <location>
        <begin position="156"/>
        <end position="183"/>
    </location>
</feature>
<feature type="topological domain" description="Mitochondrial intermembrane" evidence="1">
    <location>
        <begin position="184"/>
        <end position="190"/>
    </location>
</feature>
<feature type="transmembrane region" description="Helical; Name=VI" evidence="1">
    <location>
        <begin position="191"/>
        <end position="223"/>
    </location>
</feature>
<feature type="topological domain" description="Mitochondrial matrix" evidence="1">
    <location>
        <begin position="224"/>
        <end position="232"/>
    </location>
</feature>
<feature type="transmembrane region" description="Helical; Name=VII" evidence="1">
    <location>
        <begin position="233"/>
        <end position="256"/>
    </location>
</feature>
<feature type="topological domain" description="Mitochondrial intermembrane" evidence="1">
    <location>
        <begin position="257"/>
        <end position="261"/>
    </location>
</feature>
<organism>
    <name type="scientific">Ornithorhynchus anatinus</name>
    <name type="common">Duckbill platypus</name>
    <dbReference type="NCBI Taxonomy" id="9258"/>
    <lineage>
        <taxon>Eukaryota</taxon>
        <taxon>Metazoa</taxon>
        <taxon>Chordata</taxon>
        <taxon>Craniata</taxon>
        <taxon>Vertebrata</taxon>
        <taxon>Euteleostomi</taxon>
        <taxon>Mammalia</taxon>
        <taxon>Monotremata</taxon>
        <taxon>Ornithorhynchidae</taxon>
        <taxon>Ornithorhynchus</taxon>
    </lineage>
</organism>
<keyword id="KW-0472">Membrane</keyword>
<keyword id="KW-0496">Mitochondrion</keyword>
<keyword id="KW-0999">Mitochondrion inner membrane</keyword>
<keyword id="KW-1185">Reference proteome</keyword>
<keyword id="KW-1278">Translocase</keyword>
<keyword id="KW-0812">Transmembrane</keyword>
<keyword id="KW-1133">Transmembrane helix</keyword>
<name>COX3_ORNAN</name>
<geneLocation type="mitochondrion"/>
<comment type="function">
    <text evidence="2">Component of the cytochrome c oxidase, the last enzyme in the mitochondrial electron transport chain which drives oxidative phosphorylation. The respiratory chain contains 3 multisubunit complexes succinate dehydrogenase (complex II, CII), ubiquinol-cytochrome c oxidoreductase (cytochrome b-c1 complex, complex III, CIII) and cytochrome c oxidase (complex IV, CIV), that cooperate to transfer electrons derived from NADH and succinate to molecular oxygen, creating an electrochemical gradient over the inner membrane that drives transmembrane transport and the ATP synthase. Cytochrome c oxidase is the component of the respiratory chain that catalyzes the reduction of oxygen to water. Electrons originating from reduced cytochrome c in the intermembrane space (IMS) are transferred via the dinuclear copper A center (CU(A)) of subunit 2 and heme A of subunit 1 to the active site in subunit 1, a binuclear center (BNC) formed by heme A3 and copper B (CU(B)). The BNC reduces molecular oxygen to 2 water molecules using 4 electrons from cytochrome c in the IMS and 4 protons from the mitochondrial matrix.</text>
</comment>
<comment type="catalytic activity">
    <reaction evidence="2">
        <text>4 Fe(II)-[cytochrome c] + O2 + 8 H(+)(in) = 4 Fe(III)-[cytochrome c] + 2 H2O + 4 H(+)(out)</text>
        <dbReference type="Rhea" id="RHEA:11436"/>
        <dbReference type="Rhea" id="RHEA-COMP:10350"/>
        <dbReference type="Rhea" id="RHEA-COMP:14399"/>
        <dbReference type="ChEBI" id="CHEBI:15377"/>
        <dbReference type="ChEBI" id="CHEBI:15378"/>
        <dbReference type="ChEBI" id="CHEBI:15379"/>
        <dbReference type="ChEBI" id="CHEBI:29033"/>
        <dbReference type="ChEBI" id="CHEBI:29034"/>
        <dbReference type="EC" id="7.1.1.9"/>
    </reaction>
    <physiologicalReaction direction="left-to-right" evidence="2">
        <dbReference type="Rhea" id="RHEA:11437"/>
    </physiologicalReaction>
</comment>
<comment type="subunit">
    <text evidence="1">Component of the cytochrome c oxidase (complex IV, CIV), a multisubunit enzyme composed of 14 subunits. The complex is composed of a catalytic core of 3 subunits MT-CO1, MT-CO2 and MT-CO3, encoded in the mitochondrial DNA, and 11 supernumerary subunits COX4I, COX5A, COX5B, COX6A, COX6B, COX6C, COX7A, COX7B, COX7C, COX8 and NDUFA4, which are encoded in the nuclear genome. The complex exists as a monomer or a dimer and forms supercomplexes (SCs) in the inner mitochondrial membrane with NADH-ubiquinone oxidoreductase (complex I, CI) and ubiquinol-cytochrome c oxidoreductase (cytochrome b-c1 complex, complex III, CIII), resulting in different assemblies (supercomplex SCI(1)III(2)IV(1) and megacomplex MCI(2)III(2)IV(2)).</text>
</comment>
<comment type="subcellular location">
    <subcellularLocation>
        <location evidence="1">Mitochondrion inner membrane</location>
        <topology evidence="1">Multi-pass membrane protein</topology>
    </subcellularLocation>
</comment>
<comment type="similarity">
    <text evidence="3">Belongs to the cytochrome c oxidase subunit 3 family.</text>
</comment>
<dbReference type="EC" id="7.1.1.9"/>
<dbReference type="EMBL" id="X83427">
    <property type="protein sequence ID" value="CAA58461.1"/>
    <property type="molecule type" value="Genomic_DNA"/>
</dbReference>
<dbReference type="PIR" id="G58888">
    <property type="entry name" value="G58888"/>
</dbReference>
<dbReference type="SMR" id="Q36455"/>
<dbReference type="FunCoup" id="Q36455">
    <property type="interactions" value="173"/>
</dbReference>
<dbReference type="STRING" id="9258.ENSOANP00000024991"/>
<dbReference type="Ensembl" id="ENSOANT00000028495.2">
    <property type="protein sequence ID" value="ENSOANP00000024991.1"/>
    <property type="gene ID" value="ENSOANG00000019371.2"/>
</dbReference>
<dbReference type="KEGG" id="oaa:808707"/>
<dbReference type="CTD" id="4514"/>
<dbReference type="eggNOG" id="KOG4664">
    <property type="taxonomic scope" value="Eukaryota"/>
</dbReference>
<dbReference type="GeneTree" id="ENSGT00390000013064"/>
<dbReference type="HOGENOM" id="CLU_044071_0_0_1"/>
<dbReference type="InParanoid" id="Q36455"/>
<dbReference type="OMA" id="SIYWWGS"/>
<dbReference type="OrthoDB" id="10050457at2759"/>
<dbReference type="TreeFam" id="TF343435"/>
<dbReference type="Proteomes" id="UP000002279">
    <property type="component" value="Mitochondrion"/>
</dbReference>
<dbReference type="Bgee" id="ENSOANG00000019371">
    <property type="expression patterns" value="Expressed in heart and 7 other cell types or tissues"/>
</dbReference>
<dbReference type="GO" id="GO:0005743">
    <property type="term" value="C:mitochondrial inner membrane"/>
    <property type="evidence" value="ECO:0007669"/>
    <property type="project" value="UniProtKB-SubCell"/>
</dbReference>
<dbReference type="GO" id="GO:0005739">
    <property type="term" value="C:mitochondrion"/>
    <property type="evidence" value="ECO:0000318"/>
    <property type="project" value="GO_Central"/>
</dbReference>
<dbReference type="GO" id="GO:0045277">
    <property type="term" value="C:respiratory chain complex IV"/>
    <property type="evidence" value="ECO:0000250"/>
    <property type="project" value="UniProtKB"/>
</dbReference>
<dbReference type="GO" id="GO:0004129">
    <property type="term" value="F:cytochrome-c oxidase activity"/>
    <property type="evidence" value="ECO:0007669"/>
    <property type="project" value="UniProtKB-EC"/>
</dbReference>
<dbReference type="GO" id="GO:0006123">
    <property type="term" value="P:mitochondrial electron transport, cytochrome c to oxygen"/>
    <property type="evidence" value="ECO:0000318"/>
    <property type="project" value="GO_Central"/>
</dbReference>
<dbReference type="GO" id="GO:0008535">
    <property type="term" value="P:respiratory chain complex IV assembly"/>
    <property type="evidence" value="ECO:0000250"/>
    <property type="project" value="UniProtKB"/>
</dbReference>
<dbReference type="CDD" id="cd01665">
    <property type="entry name" value="Cyt_c_Oxidase_III"/>
    <property type="match status" value="1"/>
</dbReference>
<dbReference type="FunFam" id="1.10.287.70:FF:000048">
    <property type="entry name" value="Cytochrome c oxidase subunit 3"/>
    <property type="match status" value="1"/>
</dbReference>
<dbReference type="FunFam" id="1.20.120.80:FF:000002">
    <property type="entry name" value="Cytochrome c oxidase subunit 3"/>
    <property type="match status" value="1"/>
</dbReference>
<dbReference type="Gene3D" id="1.10.287.70">
    <property type="match status" value="1"/>
</dbReference>
<dbReference type="Gene3D" id="1.20.120.80">
    <property type="entry name" value="Cytochrome c oxidase, subunit III, four-helix bundle"/>
    <property type="match status" value="1"/>
</dbReference>
<dbReference type="InterPro" id="IPR024791">
    <property type="entry name" value="Cyt_c/ubiquinol_Oxase_su3"/>
</dbReference>
<dbReference type="InterPro" id="IPR033945">
    <property type="entry name" value="Cyt_c_oxase_su3_dom"/>
</dbReference>
<dbReference type="InterPro" id="IPR000298">
    <property type="entry name" value="Cyt_c_oxidase-like_su3"/>
</dbReference>
<dbReference type="InterPro" id="IPR035973">
    <property type="entry name" value="Cyt_c_oxidase_su3-like_sf"/>
</dbReference>
<dbReference type="InterPro" id="IPR013833">
    <property type="entry name" value="Cyt_c_oxidase_su3_a-hlx"/>
</dbReference>
<dbReference type="PANTHER" id="PTHR11403:SF7">
    <property type="entry name" value="CYTOCHROME C OXIDASE SUBUNIT 3"/>
    <property type="match status" value="1"/>
</dbReference>
<dbReference type="PANTHER" id="PTHR11403">
    <property type="entry name" value="CYTOCHROME C OXIDASE SUBUNIT III"/>
    <property type="match status" value="1"/>
</dbReference>
<dbReference type="Pfam" id="PF00510">
    <property type="entry name" value="COX3"/>
    <property type="match status" value="1"/>
</dbReference>
<dbReference type="SUPFAM" id="SSF81452">
    <property type="entry name" value="Cytochrome c oxidase subunit III-like"/>
    <property type="match status" value="1"/>
</dbReference>
<dbReference type="PROSITE" id="PS50253">
    <property type="entry name" value="COX3"/>
    <property type="match status" value="1"/>
</dbReference>
<accession>Q36455</accession>
<protein>
    <recommendedName>
        <fullName>Cytochrome c oxidase subunit 3</fullName>
        <ecNumber>7.1.1.9</ecNumber>
    </recommendedName>
    <alternativeName>
        <fullName>Cytochrome c oxidase polypeptide III</fullName>
    </alternativeName>
</protein>
<reference key="1">
    <citation type="journal article" date="1996" name="J. Mol. Evol.">
        <title>The mitochondrial genome of a monotreme--the platypus (Ornithorhynchus anatinus).</title>
        <authorList>
            <person name="Janke A."/>
            <person name="Gemmell N.J."/>
            <person name="Feldmaier-Fuchs G."/>
            <person name="von Haeseler A."/>
            <person name="Paabo S."/>
        </authorList>
    </citation>
    <scope>NUCLEOTIDE SEQUENCE [LARGE SCALE GENOMIC DNA]</scope>
    <source>
        <strain evidence="4">Glennie</strain>
    </source>
</reference>
<sequence>MTHQTHAYHMVNPSPWPLTGAMSALLLTSGLIMWFHFNSYTLLLLGLLTNLISSYQWWRDIVREGTYQGHHTKIVQKGLRYGMILFIISEVFFFLGFFWAFYHSSLAPTPELGGCWPPTGISPLNPLEVPLLNTSILLASGVSITWAHHSLMEGNRKQMLQALTITIALGLYFTALQAMEYYEASFTISDGVYGSTFFVATGFHGLHVIIGTTFLITCLVRQTLYHFTSNHHFGFEAAAWYWHFVDVVWLFLYVSIYWWGS</sequence>
<proteinExistence type="inferred from homology"/>
<gene>
    <name type="primary">MT-CO3</name>
    <name type="synonym">COIII</name>
    <name type="synonym">COXIII</name>
    <name type="synonym">MTCO3</name>
</gene>
<evidence type="ECO:0000250" key="1">
    <source>
        <dbReference type="UniProtKB" id="P00415"/>
    </source>
</evidence>
<evidence type="ECO:0000250" key="2">
    <source>
        <dbReference type="UniProtKB" id="P00420"/>
    </source>
</evidence>
<evidence type="ECO:0000305" key="3"/>
<evidence type="ECO:0000312" key="4">
    <source>
        <dbReference type="Proteomes" id="UP000002279"/>
    </source>
</evidence>